<keyword id="KW-0963">Cytoplasm</keyword>
<keyword id="KW-1185">Reference proteome</keyword>
<keyword id="KW-0690">Ribosome biogenesis</keyword>
<accession>Q8DQV6</accession>
<gene>
    <name evidence="1" type="primary">rimP</name>
    <name type="ordered locus">spr0477</name>
</gene>
<reference key="1">
    <citation type="journal article" date="2001" name="J. Bacteriol.">
        <title>Genome of the bacterium Streptococcus pneumoniae strain R6.</title>
        <authorList>
            <person name="Hoskins J."/>
            <person name="Alborn W.E. Jr."/>
            <person name="Arnold J."/>
            <person name="Blaszczak L.C."/>
            <person name="Burgett S."/>
            <person name="DeHoff B.S."/>
            <person name="Estrem S.T."/>
            <person name="Fritz L."/>
            <person name="Fu D.-J."/>
            <person name="Fuller W."/>
            <person name="Geringer C."/>
            <person name="Gilmour R."/>
            <person name="Glass J.S."/>
            <person name="Khoja H."/>
            <person name="Kraft A.R."/>
            <person name="Lagace R.E."/>
            <person name="LeBlanc D.J."/>
            <person name="Lee L.N."/>
            <person name="Lefkowitz E.J."/>
            <person name="Lu J."/>
            <person name="Matsushima P."/>
            <person name="McAhren S.M."/>
            <person name="McHenney M."/>
            <person name="McLeaster K."/>
            <person name="Mundy C.W."/>
            <person name="Nicas T.I."/>
            <person name="Norris F.H."/>
            <person name="O'Gara M."/>
            <person name="Peery R.B."/>
            <person name="Robertson G.T."/>
            <person name="Rockey P."/>
            <person name="Sun P.-M."/>
            <person name="Winkler M.E."/>
            <person name="Yang Y."/>
            <person name="Young-Bellido M."/>
            <person name="Zhao G."/>
            <person name="Zook C.A."/>
            <person name="Baltz R.H."/>
            <person name="Jaskunas S.R."/>
            <person name="Rosteck P.R. Jr."/>
            <person name="Skatrud P.L."/>
            <person name="Glass J.I."/>
        </authorList>
    </citation>
    <scope>NUCLEOTIDE SEQUENCE [LARGE SCALE GENOMIC DNA]</scope>
    <source>
        <strain>ATCC BAA-255 / R6</strain>
    </source>
</reference>
<dbReference type="EMBL" id="AE007317">
    <property type="protein sequence ID" value="AAK99281.1"/>
    <property type="molecule type" value="Genomic_DNA"/>
</dbReference>
<dbReference type="PIR" id="E97931">
    <property type="entry name" value="E97931"/>
</dbReference>
<dbReference type="RefSeq" id="NP_358071.1">
    <property type="nucleotide sequence ID" value="NC_003098.1"/>
</dbReference>
<dbReference type="RefSeq" id="WP_001810863.1">
    <property type="nucleotide sequence ID" value="NC_003098.1"/>
</dbReference>
<dbReference type="SMR" id="Q8DQV6"/>
<dbReference type="STRING" id="171101.spr0477"/>
<dbReference type="KEGG" id="spr:spr0477"/>
<dbReference type="PATRIC" id="fig|171101.6.peg.524"/>
<dbReference type="eggNOG" id="COG0779">
    <property type="taxonomic scope" value="Bacteria"/>
</dbReference>
<dbReference type="HOGENOM" id="CLU_070525_2_0_9"/>
<dbReference type="Proteomes" id="UP000000586">
    <property type="component" value="Chromosome"/>
</dbReference>
<dbReference type="GO" id="GO:0005829">
    <property type="term" value="C:cytosol"/>
    <property type="evidence" value="ECO:0000318"/>
    <property type="project" value="GO_Central"/>
</dbReference>
<dbReference type="GO" id="GO:0000028">
    <property type="term" value="P:ribosomal small subunit assembly"/>
    <property type="evidence" value="ECO:0000318"/>
    <property type="project" value="GO_Central"/>
</dbReference>
<dbReference type="GO" id="GO:0006412">
    <property type="term" value="P:translation"/>
    <property type="evidence" value="ECO:0000318"/>
    <property type="project" value="GO_Central"/>
</dbReference>
<dbReference type="CDD" id="cd01734">
    <property type="entry name" value="YlxS_C"/>
    <property type="match status" value="1"/>
</dbReference>
<dbReference type="Gene3D" id="2.30.30.180">
    <property type="entry name" value="Ribosome maturation factor RimP, C-terminal domain"/>
    <property type="match status" value="1"/>
</dbReference>
<dbReference type="Gene3D" id="3.30.300.70">
    <property type="entry name" value="RimP-like superfamily, N-terminal"/>
    <property type="match status" value="1"/>
</dbReference>
<dbReference type="HAMAP" id="MF_01077">
    <property type="entry name" value="RimP"/>
    <property type="match status" value="1"/>
</dbReference>
<dbReference type="InterPro" id="IPR003728">
    <property type="entry name" value="Ribosome_maturation_RimP"/>
</dbReference>
<dbReference type="InterPro" id="IPR028998">
    <property type="entry name" value="RimP_C"/>
</dbReference>
<dbReference type="InterPro" id="IPR036847">
    <property type="entry name" value="RimP_C_sf"/>
</dbReference>
<dbReference type="InterPro" id="IPR028989">
    <property type="entry name" value="RimP_N"/>
</dbReference>
<dbReference type="InterPro" id="IPR035956">
    <property type="entry name" value="RimP_N_sf"/>
</dbReference>
<dbReference type="NCBIfam" id="NF000928">
    <property type="entry name" value="PRK00092.1-2"/>
    <property type="match status" value="1"/>
</dbReference>
<dbReference type="PANTHER" id="PTHR33867">
    <property type="entry name" value="RIBOSOME MATURATION FACTOR RIMP"/>
    <property type="match status" value="1"/>
</dbReference>
<dbReference type="PANTHER" id="PTHR33867:SF1">
    <property type="entry name" value="RIBOSOME MATURATION FACTOR RIMP"/>
    <property type="match status" value="1"/>
</dbReference>
<dbReference type="Pfam" id="PF17384">
    <property type="entry name" value="DUF150_C"/>
    <property type="match status" value="1"/>
</dbReference>
<dbReference type="Pfam" id="PF02576">
    <property type="entry name" value="RimP_N"/>
    <property type="match status" value="1"/>
</dbReference>
<dbReference type="SUPFAM" id="SSF74942">
    <property type="entry name" value="YhbC-like, C-terminal domain"/>
    <property type="match status" value="1"/>
</dbReference>
<dbReference type="SUPFAM" id="SSF75420">
    <property type="entry name" value="YhbC-like, N-terminal domain"/>
    <property type="match status" value="1"/>
</dbReference>
<name>RIMP_STRR6</name>
<feature type="chain" id="PRO_0000181935" description="Ribosome maturation factor RimP">
    <location>
        <begin position="1"/>
        <end position="159"/>
    </location>
</feature>
<evidence type="ECO:0000255" key="1">
    <source>
        <dbReference type="HAMAP-Rule" id="MF_01077"/>
    </source>
</evidence>
<protein>
    <recommendedName>
        <fullName evidence="1">Ribosome maturation factor RimP</fullName>
    </recommendedName>
</protein>
<proteinExistence type="inferred from homology"/>
<comment type="function">
    <text evidence="1">Required for maturation of 30S ribosomal subunits.</text>
</comment>
<comment type="subcellular location">
    <subcellularLocation>
        <location evidence="1">Cytoplasm</location>
    </subcellularLocation>
</comment>
<comment type="similarity">
    <text evidence="1">Belongs to the RimP family.</text>
</comment>
<organism>
    <name type="scientific">Streptococcus pneumoniae (strain ATCC BAA-255 / R6)</name>
    <dbReference type="NCBI Taxonomy" id="171101"/>
    <lineage>
        <taxon>Bacteria</taxon>
        <taxon>Bacillati</taxon>
        <taxon>Bacillota</taxon>
        <taxon>Bacilli</taxon>
        <taxon>Lactobacillales</taxon>
        <taxon>Streptococcaceae</taxon>
        <taxon>Streptococcus</taxon>
    </lineage>
</organism>
<sequence>MDAIATIVELVREVVEPVIEAPFELVDIEYGKIGSDMILSIFVDKPEGITLNDTADLTEIISPVLDTIKPDPFPEQYFLEITSPGLERPLKTKDAVAGAVGKYIHVGLYQAIDKQKVFEGTLLAFEEDELTMEYMDKTRKKTVRIPYSLVSKARLAVKL</sequence>